<sequence>MSRAKGAKAEEIGALFLQDLGYKIIDRNFYAPFGEIDIIAQKGGVLHFVEVKSGANFEPIYNITPLKLSRIIKSAQYYLKQKKITPPFCVDALILRGGEVEFIENITL</sequence>
<proteinExistence type="inferred from homology"/>
<comment type="similarity">
    <text evidence="1">Belongs to the UPF0102 family.</text>
</comment>
<reference key="1">
    <citation type="journal article" date="2003" name="Proc. Natl. Acad. Sci. U.S.A.">
        <title>Complete genome sequence and analysis of Wolinella succinogenes.</title>
        <authorList>
            <person name="Baar C."/>
            <person name="Eppinger M."/>
            <person name="Raddatz G."/>
            <person name="Simon J."/>
            <person name="Lanz C."/>
            <person name="Klimmek O."/>
            <person name="Nandakumar R."/>
            <person name="Gross R."/>
            <person name="Rosinus A."/>
            <person name="Keller H."/>
            <person name="Jagtap P."/>
            <person name="Linke B."/>
            <person name="Meyer F."/>
            <person name="Lederer H."/>
            <person name="Schuster S.C."/>
        </authorList>
    </citation>
    <scope>NUCLEOTIDE SEQUENCE [LARGE SCALE GENOMIC DNA]</scope>
    <source>
        <strain>ATCC 29543 / DSM 1740 / CCUG 13145 / JCM 31913 / LMG 7466 / NCTC 11488 / FDC 602W</strain>
    </source>
</reference>
<accession>Q7MSG7</accession>
<keyword id="KW-1185">Reference proteome</keyword>
<gene>
    <name type="ordered locus">WS0451</name>
</gene>
<protein>
    <recommendedName>
        <fullName evidence="1">UPF0102 protein WS0451</fullName>
    </recommendedName>
</protein>
<organism>
    <name type="scientific">Wolinella succinogenes (strain ATCC 29543 / DSM 1740 / CCUG 13145 / JCM 31913 / LMG 7466 / NCTC 11488 / FDC 602W)</name>
    <name type="common">Vibrio succinogenes</name>
    <dbReference type="NCBI Taxonomy" id="273121"/>
    <lineage>
        <taxon>Bacteria</taxon>
        <taxon>Pseudomonadati</taxon>
        <taxon>Campylobacterota</taxon>
        <taxon>Epsilonproteobacteria</taxon>
        <taxon>Campylobacterales</taxon>
        <taxon>Helicobacteraceae</taxon>
        <taxon>Wolinella</taxon>
    </lineage>
</organism>
<evidence type="ECO:0000255" key="1">
    <source>
        <dbReference type="HAMAP-Rule" id="MF_00048"/>
    </source>
</evidence>
<feature type="chain" id="PRO_0000336284" description="UPF0102 protein WS0451">
    <location>
        <begin position="1"/>
        <end position="108"/>
    </location>
</feature>
<dbReference type="EMBL" id="BX571658">
    <property type="protein sequence ID" value="CAE09593.1"/>
    <property type="molecule type" value="Genomic_DNA"/>
</dbReference>
<dbReference type="RefSeq" id="WP_011138393.1">
    <property type="nucleotide sequence ID" value="NC_005090.1"/>
</dbReference>
<dbReference type="SMR" id="Q7MSG7"/>
<dbReference type="STRING" id="273121.WS0451"/>
<dbReference type="KEGG" id="wsu:WS0451"/>
<dbReference type="eggNOG" id="COG0792">
    <property type="taxonomic scope" value="Bacteria"/>
</dbReference>
<dbReference type="HOGENOM" id="CLU_115353_3_2_7"/>
<dbReference type="Proteomes" id="UP000000422">
    <property type="component" value="Chromosome"/>
</dbReference>
<dbReference type="GO" id="GO:0003676">
    <property type="term" value="F:nucleic acid binding"/>
    <property type="evidence" value="ECO:0007669"/>
    <property type="project" value="InterPro"/>
</dbReference>
<dbReference type="Gene3D" id="3.40.1350.10">
    <property type="match status" value="1"/>
</dbReference>
<dbReference type="HAMAP" id="MF_00048">
    <property type="entry name" value="UPF0102"/>
    <property type="match status" value="1"/>
</dbReference>
<dbReference type="InterPro" id="IPR011335">
    <property type="entry name" value="Restrct_endonuc-II-like"/>
</dbReference>
<dbReference type="InterPro" id="IPR011856">
    <property type="entry name" value="tRNA_endonuc-like_dom_sf"/>
</dbReference>
<dbReference type="InterPro" id="IPR003509">
    <property type="entry name" value="UPF0102_YraN-like"/>
</dbReference>
<dbReference type="NCBIfam" id="NF009152">
    <property type="entry name" value="PRK12497.2-4"/>
    <property type="match status" value="1"/>
</dbReference>
<dbReference type="PANTHER" id="PTHR34039">
    <property type="entry name" value="UPF0102 PROTEIN YRAN"/>
    <property type="match status" value="1"/>
</dbReference>
<dbReference type="PANTHER" id="PTHR34039:SF1">
    <property type="entry name" value="UPF0102 PROTEIN YRAN"/>
    <property type="match status" value="1"/>
</dbReference>
<dbReference type="Pfam" id="PF02021">
    <property type="entry name" value="UPF0102"/>
    <property type="match status" value="1"/>
</dbReference>
<dbReference type="SUPFAM" id="SSF52980">
    <property type="entry name" value="Restriction endonuclease-like"/>
    <property type="match status" value="1"/>
</dbReference>
<name>Y451_WOLSU</name>